<feature type="chain" id="PRO_0000102979" description="SsrA-binding protein">
    <location>
        <begin position="1"/>
        <end position="160"/>
    </location>
</feature>
<keyword id="KW-0963">Cytoplasm</keyword>
<keyword id="KW-1185">Reference proteome</keyword>
<keyword id="KW-0694">RNA-binding</keyword>
<comment type="function">
    <text evidence="1">Required for rescue of stalled ribosomes mediated by trans-translation. Binds to transfer-messenger RNA (tmRNA), required for stable association of tmRNA with ribosomes. tmRNA and SmpB together mimic tRNA shape, replacing the anticodon stem-loop with SmpB. tmRNA is encoded by the ssrA gene; the 2 termini fold to resemble tRNA(Ala) and it encodes a 'tag peptide', a short internal open reading frame. During trans-translation Ala-aminoacylated tmRNA acts like a tRNA, entering the A-site of stalled ribosomes, displacing the stalled mRNA. The ribosome then switches to translate the ORF on the tmRNA; the nascent peptide is terminated with the 'tag peptide' encoded by the tmRNA and targeted for degradation. The ribosome is freed to recommence translation, which seems to be the essential function of trans-translation.</text>
</comment>
<comment type="subcellular location">
    <subcellularLocation>
        <location evidence="1">Cytoplasm</location>
    </subcellularLocation>
    <text evidence="1">The tmRNA-SmpB complex associates with stalled 70S ribosomes.</text>
</comment>
<comment type="similarity">
    <text evidence="1">Belongs to the SmpB family.</text>
</comment>
<reference key="1">
    <citation type="journal article" date="2003" name="Proc. Natl. Acad. Sci. U.S.A.">
        <title>The complete genome sequence of Mycobacterium bovis.</title>
        <authorList>
            <person name="Garnier T."/>
            <person name="Eiglmeier K."/>
            <person name="Camus J.-C."/>
            <person name="Medina N."/>
            <person name="Mansoor H."/>
            <person name="Pryor M."/>
            <person name="Duthoy S."/>
            <person name="Grondin S."/>
            <person name="Lacroix C."/>
            <person name="Monsempe C."/>
            <person name="Simon S."/>
            <person name="Harris B."/>
            <person name="Atkin R."/>
            <person name="Doggett J."/>
            <person name="Mayes R."/>
            <person name="Keating L."/>
            <person name="Wheeler P.R."/>
            <person name="Parkhill J."/>
            <person name="Barrell B.G."/>
            <person name="Cole S.T."/>
            <person name="Gordon S.V."/>
            <person name="Hewinson R.G."/>
        </authorList>
    </citation>
    <scope>NUCLEOTIDE SEQUENCE [LARGE SCALE GENOMIC DNA]</scope>
    <source>
        <strain>ATCC BAA-935 / AF2122/97</strain>
    </source>
</reference>
<reference key="2">
    <citation type="journal article" date="2017" name="Genome Announc.">
        <title>Updated reference genome sequence and annotation of Mycobacterium bovis AF2122/97.</title>
        <authorList>
            <person name="Malone K.M."/>
            <person name="Farrell D."/>
            <person name="Stuber T.P."/>
            <person name="Schubert O.T."/>
            <person name="Aebersold R."/>
            <person name="Robbe-Austerman S."/>
            <person name="Gordon S.V."/>
        </authorList>
    </citation>
    <scope>NUCLEOTIDE SEQUENCE [LARGE SCALE GENOMIC DNA]</scope>
    <scope>GENOME REANNOTATION</scope>
    <source>
        <strain>ATCC BAA-935 / AF2122/97</strain>
    </source>
</reference>
<gene>
    <name evidence="1" type="primary">smpB</name>
    <name type="ordered locus">BQ2027_MB3127C</name>
</gene>
<proteinExistence type="inferred from homology"/>
<protein>
    <recommendedName>
        <fullName evidence="1">SsrA-binding protein</fullName>
    </recommendedName>
    <alternativeName>
        <fullName evidence="1">Small protein B</fullName>
    </alternativeName>
</protein>
<evidence type="ECO:0000255" key="1">
    <source>
        <dbReference type="HAMAP-Rule" id="MF_00023"/>
    </source>
</evidence>
<sequence>MSKSSRGGRQIVASNRKARHNYSIIEVFEAGVALQGTEVKSLREGQASLADSFATIDDGEVWLRNAHIPEYRHGSWTNHEPRRNRKLLLHRRQIDTLVGKIREGNFALVPLSLYFAEGKVKVELALARGKQARDKRQDMARRDAQREVLRELGRRAKGMT</sequence>
<dbReference type="EMBL" id="LT708304">
    <property type="protein sequence ID" value="SIU01753.1"/>
    <property type="molecule type" value="Genomic_DNA"/>
</dbReference>
<dbReference type="RefSeq" id="NP_856772.1">
    <property type="nucleotide sequence ID" value="NC_002945.3"/>
</dbReference>
<dbReference type="RefSeq" id="WP_003416113.1">
    <property type="nucleotide sequence ID" value="NC_002945.4"/>
</dbReference>
<dbReference type="SMR" id="P0A613"/>
<dbReference type="GeneID" id="45427099"/>
<dbReference type="KEGG" id="mbo:BQ2027_MB3127C"/>
<dbReference type="PATRIC" id="fig|233413.5.peg.3437"/>
<dbReference type="Proteomes" id="UP000001419">
    <property type="component" value="Chromosome"/>
</dbReference>
<dbReference type="GO" id="GO:0005829">
    <property type="term" value="C:cytosol"/>
    <property type="evidence" value="ECO:0007669"/>
    <property type="project" value="TreeGrafter"/>
</dbReference>
<dbReference type="GO" id="GO:0003723">
    <property type="term" value="F:RNA binding"/>
    <property type="evidence" value="ECO:0007669"/>
    <property type="project" value="UniProtKB-UniRule"/>
</dbReference>
<dbReference type="GO" id="GO:0070929">
    <property type="term" value="P:trans-translation"/>
    <property type="evidence" value="ECO:0007669"/>
    <property type="project" value="UniProtKB-UniRule"/>
</dbReference>
<dbReference type="CDD" id="cd09294">
    <property type="entry name" value="SmpB"/>
    <property type="match status" value="1"/>
</dbReference>
<dbReference type="Gene3D" id="2.40.280.10">
    <property type="match status" value="1"/>
</dbReference>
<dbReference type="HAMAP" id="MF_00023">
    <property type="entry name" value="SmpB"/>
    <property type="match status" value="1"/>
</dbReference>
<dbReference type="InterPro" id="IPR023620">
    <property type="entry name" value="SmpB"/>
</dbReference>
<dbReference type="InterPro" id="IPR000037">
    <property type="entry name" value="SsrA-bd_prot"/>
</dbReference>
<dbReference type="InterPro" id="IPR020081">
    <property type="entry name" value="SsrA-bd_prot_CS"/>
</dbReference>
<dbReference type="NCBIfam" id="NF003843">
    <property type="entry name" value="PRK05422.1"/>
    <property type="match status" value="1"/>
</dbReference>
<dbReference type="NCBIfam" id="TIGR00086">
    <property type="entry name" value="smpB"/>
    <property type="match status" value="1"/>
</dbReference>
<dbReference type="PANTHER" id="PTHR30308:SF2">
    <property type="entry name" value="SSRA-BINDING PROTEIN"/>
    <property type="match status" value="1"/>
</dbReference>
<dbReference type="PANTHER" id="PTHR30308">
    <property type="entry name" value="TMRNA-BINDING COMPONENT OF TRANS-TRANSLATION TAGGING COMPLEX"/>
    <property type="match status" value="1"/>
</dbReference>
<dbReference type="Pfam" id="PF01668">
    <property type="entry name" value="SmpB"/>
    <property type="match status" value="1"/>
</dbReference>
<dbReference type="SUPFAM" id="SSF74982">
    <property type="entry name" value="Small protein B (SmpB)"/>
    <property type="match status" value="1"/>
</dbReference>
<dbReference type="PROSITE" id="PS01317">
    <property type="entry name" value="SSRP"/>
    <property type="match status" value="1"/>
</dbReference>
<name>SSRP_MYCBO</name>
<accession>P0A613</accession>
<accession>A0A1R3Y348</accession>
<accession>O05778</accession>
<accession>P96294</accession>
<accession>X2BMB6</accession>
<organism>
    <name type="scientific">Mycobacterium bovis (strain ATCC BAA-935 / AF2122/97)</name>
    <dbReference type="NCBI Taxonomy" id="233413"/>
    <lineage>
        <taxon>Bacteria</taxon>
        <taxon>Bacillati</taxon>
        <taxon>Actinomycetota</taxon>
        <taxon>Actinomycetes</taxon>
        <taxon>Mycobacteriales</taxon>
        <taxon>Mycobacteriaceae</taxon>
        <taxon>Mycobacterium</taxon>
        <taxon>Mycobacterium tuberculosis complex</taxon>
    </lineage>
</organism>